<sequence>MQVLVRDNNVDQALRVLKKKMQREGIFREMKQRKAYEKPSVRKAREKAEAVRRARKQARKTAIREGLIAAPKPKPRAVAPRRPAAAPAPASSPTTTA</sequence>
<protein>
    <recommendedName>
        <fullName evidence="1">Small ribosomal subunit protein bS21</fullName>
    </recommendedName>
    <alternativeName>
        <fullName evidence="3">30S ribosomal protein S21</fullName>
    </alternativeName>
</protein>
<gene>
    <name evidence="1" type="primary">rpsU</name>
    <name type="ordered locus">M446_0684</name>
</gene>
<organism>
    <name type="scientific">Methylobacterium sp. (strain 4-46)</name>
    <dbReference type="NCBI Taxonomy" id="426117"/>
    <lineage>
        <taxon>Bacteria</taxon>
        <taxon>Pseudomonadati</taxon>
        <taxon>Pseudomonadota</taxon>
        <taxon>Alphaproteobacteria</taxon>
        <taxon>Hyphomicrobiales</taxon>
        <taxon>Methylobacteriaceae</taxon>
        <taxon>Methylobacterium</taxon>
    </lineage>
</organism>
<comment type="similarity">
    <text evidence="1">Belongs to the bacterial ribosomal protein bS21 family.</text>
</comment>
<keyword id="KW-0687">Ribonucleoprotein</keyword>
<keyword id="KW-0689">Ribosomal protein</keyword>
<evidence type="ECO:0000255" key="1">
    <source>
        <dbReference type="HAMAP-Rule" id="MF_00358"/>
    </source>
</evidence>
<evidence type="ECO:0000256" key="2">
    <source>
        <dbReference type="SAM" id="MobiDB-lite"/>
    </source>
</evidence>
<evidence type="ECO:0000305" key="3"/>
<feature type="chain" id="PRO_1000120639" description="Small ribosomal subunit protein bS21">
    <location>
        <begin position="1"/>
        <end position="97"/>
    </location>
</feature>
<feature type="region of interest" description="Disordered" evidence="2">
    <location>
        <begin position="37"/>
        <end position="97"/>
    </location>
</feature>
<feature type="compositionally biased region" description="Low complexity" evidence="2">
    <location>
        <begin position="76"/>
        <end position="97"/>
    </location>
</feature>
<name>RS21_METS4</name>
<reference key="1">
    <citation type="submission" date="2008-02" db="EMBL/GenBank/DDBJ databases">
        <title>Complete sequence of chromosome of Methylobacterium sp. 4-46.</title>
        <authorList>
            <consortium name="US DOE Joint Genome Institute"/>
            <person name="Copeland A."/>
            <person name="Lucas S."/>
            <person name="Lapidus A."/>
            <person name="Glavina del Rio T."/>
            <person name="Dalin E."/>
            <person name="Tice H."/>
            <person name="Bruce D."/>
            <person name="Goodwin L."/>
            <person name="Pitluck S."/>
            <person name="Chertkov O."/>
            <person name="Brettin T."/>
            <person name="Detter J.C."/>
            <person name="Han C."/>
            <person name="Kuske C.R."/>
            <person name="Schmutz J."/>
            <person name="Larimer F."/>
            <person name="Land M."/>
            <person name="Hauser L."/>
            <person name="Kyrpides N."/>
            <person name="Ivanova N."/>
            <person name="Marx C.J."/>
            <person name="Richardson P."/>
        </authorList>
    </citation>
    <scope>NUCLEOTIDE SEQUENCE [LARGE SCALE GENOMIC DNA]</scope>
    <source>
        <strain>4-46</strain>
    </source>
</reference>
<accession>B0U7F9</accession>
<dbReference type="EMBL" id="CP000943">
    <property type="protein sequence ID" value="ACA15244.1"/>
    <property type="molecule type" value="Genomic_DNA"/>
</dbReference>
<dbReference type="RefSeq" id="WP_012330661.1">
    <property type="nucleotide sequence ID" value="NC_010511.1"/>
</dbReference>
<dbReference type="SMR" id="B0U7F9"/>
<dbReference type="STRING" id="426117.M446_0684"/>
<dbReference type="KEGG" id="met:M446_0684"/>
<dbReference type="eggNOG" id="COG0828">
    <property type="taxonomic scope" value="Bacteria"/>
</dbReference>
<dbReference type="HOGENOM" id="CLU_159258_0_0_5"/>
<dbReference type="GO" id="GO:1990904">
    <property type="term" value="C:ribonucleoprotein complex"/>
    <property type="evidence" value="ECO:0007669"/>
    <property type="project" value="UniProtKB-KW"/>
</dbReference>
<dbReference type="GO" id="GO:0005840">
    <property type="term" value="C:ribosome"/>
    <property type="evidence" value="ECO:0007669"/>
    <property type="project" value="UniProtKB-KW"/>
</dbReference>
<dbReference type="GO" id="GO:0003735">
    <property type="term" value="F:structural constituent of ribosome"/>
    <property type="evidence" value="ECO:0007669"/>
    <property type="project" value="InterPro"/>
</dbReference>
<dbReference type="GO" id="GO:0006412">
    <property type="term" value="P:translation"/>
    <property type="evidence" value="ECO:0007669"/>
    <property type="project" value="UniProtKB-UniRule"/>
</dbReference>
<dbReference type="Gene3D" id="1.20.5.1150">
    <property type="entry name" value="Ribosomal protein S8"/>
    <property type="match status" value="1"/>
</dbReference>
<dbReference type="HAMAP" id="MF_00358">
    <property type="entry name" value="Ribosomal_bS21"/>
    <property type="match status" value="1"/>
</dbReference>
<dbReference type="InterPro" id="IPR001911">
    <property type="entry name" value="Ribosomal_bS21"/>
</dbReference>
<dbReference type="InterPro" id="IPR038380">
    <property type="entry name" value="Ribosomal_bS21_sf"/>
</dbReference>
<dbReference type="NCBIfam" id="TIGR00030">
    <property type="entry name" value="S21p"/>
    <property type="match status" value="1"/>
</dbReference>
<dbReference type="PANTHER" id="PTHR21109">
    <property type="entry name" value="MITOCHONDRIAL 28S RIBOSOMAL PROTEIN S21"/>
    <property type="match status" value="1"/>
</dbReference>
<dbReference type="PANTHER" id="PTHR21109:SF0">
    <property type="entry name" value="SMALL RIBOSOMAL SUBUNIT PROTEIN BS21M"/>
    <property type="match status" value="1"/>
</dbReference>
<dbReference type="Pfam" id="PF01165">
    <property type="entry name" value="Ribosomal_S21"/>
    <property type="match status" value="1"/>
</dbReference>
<proteinExistence type="inferred from homology"/>